<protein>
    <recommendedName>
        <fullName evidence="1">RNA-binding protein Hfq</fullName>
    </recommendedName>
</protein>
<accession>A9HLS1</accession>
<accession>B5ZCL4</accession>
<name>HFQ_GLUDA</name>
<organism>
    <name type="scientific">Gluconacetobacter diazotrophicus (strain ATCC 49037 / DSM 5601 / CCUG 37298 / CIP 103539 / LMG 7603 / PAl5)</name>
    <dbReference type="NCBI Taxonomy" id="272568"/>
    <lineage>
        <taxon>Bacteria</taxon>
        <taxon>Pseudomonadati</taxon>
        <taxon>Pseudomonadota</taxon>
        <taxon>Alphaproteobacteria</taxon>
        <taxon>Acetobacterales</taxon>
        <taxon>Acetobacteraceae</taxon>
        <taxon>Gluconacetobacter</taxon>
    </lineage>
</organism>
<feature type="chain" id="PRO_1000080666" description="RNA-binding protein Hfq">
    <location>
        <begin position="1"/>
        <end position="98"/>
    </location>
</feature>
<feature type="domain" description="Sm" evidence="2">
    <location>
        <begin position="11"/>
        <end position="71"/>
    </location>
</feature>
<gene>
    <name evidence="1" type="primary">hfq</name>
    <name type="ordered locus">GDI2262</name>
    <name type="ordered locus">Gdia_0482</name>
</gene>
<sequence>MAKEPTQNVQDVFLNHVRRSKTPVTVFLVNGVKLQGIITWFDNFSVLLRRDGHTQLVYKHAISTVMPATPVVLFDPSRTEGATVDLTEKDLAGDADLL</sequence>
<comment type="function">
    <text evidence="1">RNA chaperone that binds small regulatory RNA (sRNAs) and mRNAs to facilitate mRNA translational regulation in response to envelope stress, environmental stress and changes in metabolite concentrations. Also binds with high specificity to tRNAs.</text>
</comment>
<comment type="subunit">
    <text evidence="1">Homohexamer.</text>
</comment>
<comment type="similarity">
    <text evidence="1">Belongs to the Hfq family.</text>
</comment>
<dbReference type="EMBL" id="AM889285">
    <property type="protein sequence ID" value="CAP56205.1"/>
    <property type="molecule type" value="Genomic_DNA"/>
</dbReference>
<dbReference type="EMBL" id="CP001189">
    <property type="protein sequence ID" value="ACI50278.1"/>
    <property type="molecule type" value="Genomic_DNA"/>
</dbReference>
<dbReference type="RefSeq" id="WP_012226141.1">
    <property type="nucleotide sequence ID" value="NC_010125.1"/>
</dbReference>
<dbReference type="SMR" id="A9HLS1"/>
<dbReference type="STRING" id="272568.GDI2262"/>
<dbReference type="KEGG" id="gdi:GDI2262"/>
<dbReference type="KEGG" id="gdj:Gdia_0482"/>
<dbReference type="eggNOG" id="COG1923">
    <property type="taxonomic scope" value="Bacteria"/>
</dbReference>
<dbReference type="HOGENOM" id="CLU_113688_0_0_5"/>
<dbReference type="OrthoDB" id="9799751at2"/>
<dbReference type="Proteomes" id="UP000001176">
    <property type="component" value="Chromosome"/>
</dbReference>
<dbReference type="GO" id="GO:0005829">
    <property type="term" value="C:cytosol"/>
    <property type="evidence" value="ECO:0007669"/>
    <property type="project" value="TreeGrafter"/>
</dbReference>
<dbReference type="GO" id="GO:0003723">
    <property type="term" value="F:RNA binding"/>
    <property type="evidence" value="ECO:0007669"/>
    <property type="project" value="UniProtKB-UniRule"/>
</dbReference>
<dbReference type="GO" id="GO:0006355">
    <property type="term" value="P:regulation of DNA-templated transcription"/>
    <property type="evidence" value="ECO:0007669"/>
    <property type="project" value="InterPro"/>
</dbReference>
<dbReference type="GO" id="GO:0043487">
    <property type="term" value="P:regulation of RNA stability"/>
    <property type="evidence" value="ECO:0007669"/>
    <property type="project" value="TreeGrafter"/>
</dbReference>
<dbReference type="GO" id="GO:0045974">
    <property type="term" value="P:regulation of translation, ncRNA-mediated"/>
    <property type="evidence" value="ECO:0007669"/>
    <property type="project" value="TreeGrafter"/>
</dbReference>
<dbReference type="CDD" id="cd01716">
    <property type="entry name" value="Hfq"/>
    <property type="match status" value="1"/>
</dbReference>
<dbReference type="Gene3D" id="2.30.30.100">
    <property type="match status" value="1"/>
</dbReference>
<dbReference type="HAMAP" id="MF_00436">
    <property type="entry name" value="Hfq"/>
    <property type="match status" value="1"/>
</dbReference>
<dbReference type="InterPro" id="IPR005001">
    <property type="entry name" value="Hfq"/>
</dbReference>
<dbReference type="InterPro" id="IPR010920">
    <property type="entry name" value="LSM_dom_sf"/>
</dbReference>
<dbReference type="InterPro" id="IPR047575">
    <property type="entry name" value="Sm"/>
</dbReference>
<dbReference type="NCBIfam" id="TIGR02383">
    <property type="entry name" value="Hfq"/>
    <property type="match status" value="1"/>
</dbReference>
<dbReference type="NCBIfam" id="NF001602">
    <property type="entry name" value="PRK00395.1"/>
    <property type="match status" value="1"/>
</dbReference>
<dbReference type="PANTHER" id="PTHR34772">
    <property type="entry name" value="RNA-BINDING PROTEIN HFQ"/>
    <property type="match status" value="1"/>
</dbReference>
<dbReference type="PANTHER" id="PTHR34772:SF1">
    <property type="entry name" value="RNA-BINDING PROTEIN HFQ"/>
    <property type="match status" value="1"/>
</dbReference>
<dbReference type="Pfam" id="PF17209">
    <property type="entry name" value="Hfq"/>
    <property type="match status" value="1"/>
</dbReference>
<dbReference type="SUPFAM" id="SSF50182">
    <property type="entry name" value="Sm-like ribonucleoproteins"/>
    <property type="match status" value="1"/>
</dbReference>
<dbReference type="PROSITE" id="PS52002">
    <property type="entry name" value="SM"/>
    <property type="match status" value="1"/>
</dbReference>
<proteinExistence type="inferred from homology"/>
<reference key="1">
    <citation type="journal article" date="2009" name="BMC Genomics">
        <title>Complete genome sequence of the sugarcane nitrogen-fixing endophyte Gluconacetobacter diazotrophicus Pal5.</title>
        <authorList>
            <person name="Bertalan M."/>
            <person name="Albano R."/>
            <person name="de Padua V."/>
            <person name="Rouws L."/>
            <person name="Rojas C."/>
            <person name="Hemerly A."/>
            <person name="Teixeira K."/>
            <person name="Schwab S."/>
            <person name="Araujo J."/>
            <person name="Oliveira A."/>
            <person name="Franca L."/>
            <person name="Magalhaes V."/>
            <person name="Alqueres S."/>
            <person name="Cardoso A."/>
            <person name="Almeida W."/>
            <person name="Loureiro M.M."/>
            <person name="Nogueira E."/>
            <person name="Cidade D."/>
            <person name="Oliveira D."/>
            <person name="Simao T."/>
            <person name="Macedo J."/>
            <person name="Valadao A."/>
            <person name="Dreschsel M."/>
            <person name="Freitas F."/>
            <person name="Vidal M."/>
            <person name="Guedes H."/>
            <person name="Rodrigues E."/>
            <person name="Meneses C."/>
            <person name="Brioso P."/>
            <person name="Pozzer L."/>
            <person name="Figueiredo D."/>
            <person name="Montano H."/>
            <person name="Junior J."/>
            <person name="de Souza Filho G."/>
            <person name="Martin Quintana Flores V."/>
            <person name="Ferreira B."/>
            <person name="Branco A."/>
            <person name="Gonzalez P."/>
            <person name="Guillobel H."/>
            <person name="Lemos M."/>
            <person name="Seibel L."/>
            <person name="Macedo J."/>
            <person name="Alves-Ferreira M."/>
            <person name="Sachetto-Martins G."/>
            <person name="Coelho A."/>
            <person name="Santos E."/>
            <person name="Amaral G."/>
            <person name="Neves A."/>
            <person name="Pacheco A.B."/>
            <person name="Carvalho D."/>
            <person name="Lery L."/>
            <person name="Bisch P."/>
            <person name="Rossle S.C."/>
            <person name="Urmenyi T."/>
            <person name="Rael Pereira A."/>
            <person name="Silva R."/>
            <person name="Rondinelli E."/>
            <person name="von Kruger W."/>
            <person name="Martins O."/>
            <person name="Baldani J.I."/>
            <person name="Ferreira P.C."/>
        </authorList>
    </citation>
    <scope>NUCLEOTIDE SEQUENCE [LARGE SCALE GENOMIC DNA]</scope>
    <source>
        <strain>ATCC 49037 / DSM 5601 / CCUG 37298 / CIP 103539 / LMG 7603 / PAl5</strain>
    </source>
</reference>
<reference key="2">
    <citation type="journal article" date="2010" name="Stand. Genomic Sci.">
        <title>Two genome sequences of the same bacterial strain, Gluconacetobacter diazotrophicus PAl 5, suggest a new standard in genome sequence submission.</title>
        <authorList>
            <person name="Giongo A."/>
            <person name="Tyler H.L."/>
            <person name="Zipperer U.N."/>
            <person name="Triplett E.W."/>
        </authorList>
    </citation>
    <scope>NUCLEOTIDE SEQUENCE [LARGE SCALE GENOMIC DNA]</scope>
    <source>
        <strain>ATCC 49037 / DSM 5601 / CCUG 37298 / CIP 103539 / LMG 7603 / PAl5</strain>
    </source>
</reference>
<evidence type="ECO:0000255" key="1">
    <source>
        <dbReference type="HAMAP-Rule" id="MF_00436"/>
    </source>
</evidence>
<evidence type="ECO:0000255" key="2">
    <source>
        <dbReference type="PROSITE-ProRule" id="PRU01346"/>
    </source>
</evidence>
<keyword id="KW-1185">Reference proteome</keyword>
<keyword id="KW-0694">RNA-binding</keyword>
<keyword id="KW-0346">Stress response</keyword>